<proteinExistence type="inferred from homology"/>
<comment type="function">
    <text evidence="1">Catalyzes the reversible interconversion of serine and glycine with tetrahydrofolate (THF) serving as the one-carbon carrier. This reaction serves as the major source of one-carbon groups required for the biosynthesis of purines, thymidylate, methionine, and other important biomolecules. Also exhibits THF-independent aldolase activity toward beta-hydroxyamino acids, producing glycine and aldehydes, via a retro-aldol mechanism.</text>
</comment>
<comment type="catalytic activity">
    <reaction evidence="1">
        <text>(6R)-5,10-methylene-5,6,7,8-tetrahydrofolate + glycine + H2O = (6S)-5,6,7,8-tetrahydrofolate + L-serine</text>
        <dbReference type="Rhea" id="RHEA:15481"/>
        <dbReference type="ChEBI" id="CHEBI:15377"/>
        <dbReference type="ChEBI" id="CHEBI:15636"/>
        <dbReference type="ChEBI" id="CHEBI:33384"/>
        <dbReference type="ChEBI" id="CHEBI:57305"/>
        <dbReference type="ChEBI" id="CHEBI:57453"/>
        <dbReference type="EC" id="2.1.2.1"/>
    </reaction>
</comment>
<comment type="cofactor">
    <cofactor evidence="1">
        <name>pyridoxal 5'-phosphate</name>
        <dbReference type="ChEBI" id="CHEBI:597326"/>
    </cofactor>
</comment>
<comment type="pathway">
    <text evidence="1">One-carbon metabolism; tetrahydrofolate interconversion.</text>
</comment>
<comment type="pathway">
    <text evidence="1">Amino-acid biosynthesis; glycine biosynthesis; glycine from L-serine: step 1/1.</text>
</comment>
<comment type="subunit">
    <text evidence="1">Homodimer.</text>
</comment>
<comment type="subcellular location">
    <subcellularLocation>
        <location evidence="1">Cytoplasm</location>
    </subcellularLocation>
</comment>
<comment type="similarity">
    <text evidence="1">Belongs to the SHMT family.</text>
</comment>
<comment type="sequence caution" evidence="2">
    <conflict type="erroneous initiation">
        <sequence resource="EMBL-CDS" id="AAT86998"/>
    </conflict>
</comment>
<evidence type="ECO:0000255" key="1">
    <source>
        <dbReference type="HAMAP-Rule" id="MF_00051"/>
    </source>
</evidence>
<evidence type="ECO:0000305" key="2"/>
<accession>Q5XC65</accession>
<gene>
    <name evidence="1" type="primary">glyA</name>
    <name type="ordered locus">M6_Spy0863</name>
</gene>
<keyword id="KW-0028">Amino-acid biosynthesis</keyword>
<keyword id="KW-0963">Cytoplasm</keyword>
<keyword id="KW-0554">One-carbon metabolism</keyword>
<keyword id="KW-0663">Pyridoxal phosphate</keyword>
<keyword id="KW-0808">Transferase</keyword>
<organism>
    <name type="scientific">Streptococcus pyogenes serotype M6 (strain ATCC BAA-946 / MGAS10394)</name>
    <dbReference type="NCBI Taxonomy" id="286636"/>
    <lineage>
        <taxon>Bacteria</taxon>
        <taxon>Bacillati</taxon>
        <taxon>Bacillota</taxon>
        <taxon>Bacilli</taxon>
        <taxon>Lactobacillales</taxon>
        <taxon>Streptococcaceae</taxon>
        <taxon>Streptococcus</taxon>
    </lineage>
</organism>
<reference key="1">
    <citation type="journal article" date="2004" name="J. Infect. Dis.">
        <title>Progress toward characterization of the group A Streptococcus metagenome: complete genome sequence of a macrolide-resistant serotype M6 strain.</title>
        <authorList>
            <person name="Banks D.J."/>
            <person name="Porcella S.F."/>
            <person name="Barbian K.D."/>
            <person name="Beres S.B."/>
            <person name="Philips L.E."/>
            <person name="Voyich J.M."/>
            <person name="DeLeo F.R."/>
            <person name="Martin J.M."/>
            <person name="Somerville G.A."/>
            <person name="Musser J.M."/>
        </authorList>
    </citation>
    <scope>NUCLEOTIDE SEQUENCE [LARGE SCALE GENOMIC DNA]</scope>
    <source>
        <strain>ATCC BAA-946 / MGAS10394</strain>
    </source>
</reference>
<name>GLYA_STRP6</name>
<dbReference type="EC" id="2.1.2.1" evidence="1"/>
<dbReference type="EMBL" id="CP000003">
    <property type="protein sequence ID" value="AAT86998.1"/>
    <property type="status" value="ALT_INIT"/>
    <property type="molecule type" value="Genomic_DNA"/>
</dbReference>
<dbReference type="RefSeq" id="WP_021340492.1">
    <property type="nucleotide sequence ID" value="NC_006086.1"/>
</dbReference>
<dbReference type="SMR" id="Q5XC65"/>
<dbReference type="KEGG" id="spa:M6_Spy0863"/>
<dbReference type="HOGENOM" id="CLU_022477_2_1_9"/>
<dbReference type="UniPathway" id="UPA00193"/>
<dbReference type="UniPathway" id="UPA00288">
    <property type="reaction ID" value="UER01023"/>
</dbReference>
<dbReference type="Proteomes" id="UP000001167">
    <property type="component" value="Chromosome"/>
</dbReference>
<dbReference type="GO" id="GO:0005829">
    <property type="term" value="C:cytosol"/>
    <property type="evidence" value="ECO:0007669"/>
    <property type="project" value="TreeGrafter"/>
</dbReference>
<dbReference type="GO" id="GO:0004372">
    <property type="term" value="F:glycine hydroxymethyltransferase activity"/>
    <property type="evidence" value="ECO:0007669"/>
    <property type="project" value="UniProtKB-UniRule"/>
</dbReference>
<dbReference type="GO" id="GO:0030170">
    <property type="term" value="F:pyridoxal phosphate binding"/>
    <property type="evidence" value="ECO:0007669"/>
    <property type="project" value="UniProtKB-UniRule"/>
</dbReference>
<dbReference type="GO" id="GO:0019264">
    <property type="term" value="P:glycine biosynthetic process from serine"/>
    <property type="evidence" value="ECO:0007669"/>
    <property type="project" value="UniProtKB-UniRule"/>
</dbReference>
<dbReference type="GO" id="GO:0035999">
    <property type="term" value="P:tetrahydrofolate interconversion"/>
    <property type="evidence" value="ECO:0007669"/>
    <property type="project" value="UniProtKB-UniRule"/>
</dbReference>
<dbReference type="CDD" id="cd00378">
    <property type="entry name" value="SHMT"/>
    <property type="match status" value="1"/>
</dbReference>
<dbReference type="FunFam" id="3.40.640.10:FF:000001">
    <property type="entry name" value="Serine hydroxymethyltransferase"/>
    <property type="match status" value="1"/>
</dbReference>
<dbReference type="Gene3D" id="3.90.1150.10">
    <property type="entry name" value="Aspartate Aminotransferase, domain 1"/>
    <property type="match status" value="1"/>
</dbReference>
<dbReference type="Gene3D" id="3.40.640.10">
    <property type="entry name" value="Type I PLP-dependent aspartate aminotransferase-like (Major domain)"/>
    <property type="match status" value="1"/>
</dbReference>
<dbReference type="HAMAP" id="MF_00051">
    <property type="entry name" value="SHMT"/>
    <property type="match status" value="1"/>
</dbReference>
<dbReference type="InterPro" id="IPR015424">
    <property type="entry name" value="PyrdxlP-dep_Trfase"/>
</dbReference>
<dbReference type="InterPro" id="IPR015421">
    <property type="entry name" value="PyrdxlP-dep_Trfase_major"/>
</dbReference>
<dbReference type="InterPro" id="IPR015422">
    <property type="entry name" value="PyrdxlP-dep_Trfase_small"/>
</dbReference>
<dbReference type="InterPro" id="IPR001085">
    <property type="entry name" value="Ser_HO-MeTrfase"/>
</dbReference>
<dbReference type="InterPro" id="IPR049943">
    <property type="entry name" value="Ser_HO-MeTrfase-like"/>
</dbReference>
<dbReference type="InterPro" id="IPR019798">
    <property type="entry name" value="Ser_HO-MeTrfase_PLP_BS"/>
</dbReference>
<dbReference type="InterPro" id="IPR039429">
    <property type="entry name" value="SHMT-like_dom"/>
</dbReference>
<dbReference type="NCBIfam" id="NF000586">
    <property type="entry name" value="PRK00011.1"/>
    <property type="match status" value="1"/>
</dbReference>
<dbReference type="PANTHER" id="PTHR11680">
    <property type="entry name" value="SERINE HYDROXYMETHYLTRANSFERASE"/>
    <property type="match status" value="1"/>
</dbReference>
<dbReference type="PANTHER" id="PTHR11680:SF35">
    <property type="entry name" value="SERINE HYDROXYMETHYLTRANSFERASE 1"/>
    <property type="match status" value="1"/>
</dbReference>
<dbReference type="Pfam" id="PF00464">
    <property type="entry name" value="SHMT"/>
    <property type="match status" value="1"/>
</dbReference>
<dbReference type="PIRSF" id="PIRSF000412">
    <property type="entry name" value="SHMT"/>
    <property type="match status" value="1"/>
</dbReference>
<dbReference type="SUPFAM" id="SSF53383">
    <property type="entry name" value="PLP-dependent transferases"/>
    <property type="match status" value="1"/>
</dbReference>
<dbReference type="PROSITE" id="PS00096">
    <property type="entry name" value="SHMT"/>
    <property type="match status" value="1"/>
</dbReference>
<protein>
    <recommendedName>
        <fullName evidence="1">Serine hydroxymethyltransferase</fullName>
        <shortName evidence="1">SHMT</shortName>
        <shortName evidence="1">Serine methylase</shortName>
        <ecNumber evidence="1">2.1.2.1</ecNumber>
    </recommendedName>
</protein>
<sequence length="418" mass="45015">MIFDKGNVEDFDKELWDAIHAEEERQEHHIELIASENMVSKAVMAAQGSVLTNKYAEGYPGNRYYGGTECVDIVETLAIERAKKLFGAAFANVQAHSGSQANAAAYMALIEAGDTVLGMDLAAGGHLTHGSPVNFSGKTYHFVGYSVDADTEMLNYEAILEQAKAVQPKLIVAGASAYSRSIDFEKFRAIADHVGAYLMVDMAHIAGLVAAGVHPSPVPYAHIVTSTTHKTLRGPRGGLILTNDEALAKKINSAVFPGLQGGPLEHVIAAKAVAFKEALDPAFKDYAQAIIDNTAAMAAVFAQDDRFRLISGGTDNHVFLVDVTKVIANGKLAQILLDEVNITLNKNAIPFETLSPFKTSGIRIGCAAITSRGMGVKESQTIAHLIIKALVNHNQTVILEEVRQEVRQLTDAFPLYKK</sequence>
<feature type="chain" id="PRO_0000113678" description="Serine hydroxymethyltransferase">
    <location>
        <begin position="1"/>
        <end position="418"/>
    </location>
</feature>
<feature type="binding site" evidence="1">
    <location>
        <position position="121"/>
    </location>
    <ligand>
        <name>(6S)-5,6,7,8-tetrahydrofolate</name>
        <dbReference type="ChEBI" id="CHEBI:57453"/>
    </ligand>
</feature>
<feature type="binding site" evidence="1">
    <location>
        <begin position="125"/>
        <end position="127"/>
    </location>
    <ligand>
        <name>(6S)-5,6,7,8-tetrahydrofolate</name>
        <dbReference type="ChEBI" id="CHEBI:57453"/>
    </ligand>
</feature>
<feature type="binding site" evidence="1">
    <location>
        <begin position="355"/>
        <end position="357"/>
    </location>
    <ligand>
        <name>(6S)-5,6,7,8-tetrahydrofolate</name>
        <dbReference type="ChEBI" id="CHEBI:57453"/>
    </ligand>
</feature>
<feature type="site" description="Plays an important role in substrate specificity" evidence="1">
    <location>
        <position position="229"/>
    </location>
</feature>
<feature type="modified residue" description="N6-(pyridoxal phosphate)lysine" evidence="1">
    <location>
        <position position="230"/>
    </location>
</feature>